<name>APC1_HUMAN</name>
<organism>
    <name type="scientific">Homo sapiens</name>
    <name type="common">Human</name>
    <dbReference type="NCBI Taxonomy" id="9606"/>
    <lineage>
        <taxon>Eukaryota</taxon>
        <taxon>Metazoa</taxon>
        <taxon>Chordata</taxon>
        <taxon>Craniata</taxon>
        <taxon>Vertebrata</taxon>
        <taxon>Euteleostomi</taxon>
        <taxon>Mammalia</taxon>
        <taxon>Eutheria</taxon>
        <taxon>Euarchontoglires</taxon>
        <taxon>Primates</taxon>
        <taxon>Haplorrhini</taxon>
        <taxon>Catarrhini</taxon>
        <taxon>Hominidae</taxon>
        <taxon>Homo</taxon>
    </lineage>
</organism>
<comment type="function">
    <text evidence="3 6">Component of the anaphase promoting complex/cyclosome (APC/C), a cell cycle-regulated E3 ubiquitin ligase that controls progression through mitosis and the G1 phase of the cell cycle (PubMed:18485873). The APC/C complex acts by mediating ubiquitination and subsequent degradation of target proteins: it mainly mediates the formation of 'Lys-11'-linked polyubiquitin chains and, to a lower extent, the formation of 'Lys-48'- and 'Lys-63'-linked polyubiquitin chains (PubMed:18485873). The APC/C complex catalyzes assembly of branched 'Lys-11'-/'Lys-48'-linked branched ubiquitin chains on target proteins (PubMed:29033132).</text>
</comment>
<comment type="pathway">
    <text evidence="3 6">Protein modification; protein ubiquitination.</text>
</comment>
<comment type="subunit">
    <text evidence="4 5">The mammalian APC/C is composed at least of 14 distinct subunits ANAPC1, ANAPC2, CDC27/APC3, ANAPC4, ANAPC5, CDC16/APC6, ANAPC7, CDC23/APC8, ANAPC10, ANAPC11, CDC26/APC12, ANAPC13, ANAPC15 and ANAPC16 that assemble into a complex of at least 19 chains with a combined molecular mass of around 1.2 MDa; APC/C interacts with FZR1 and FBXO5.</text>
</comment>
<comment type="PTM">
    <text evidence="2">Phosphorylated. Phosphorylation on Ser-355 occurs specifically during mitosis.</text>
</comment>
<comment type="disease" evidence="7">
    <disease id="DI-05679">
        <name>Rothmund-Thomson syndrome 1</name>
        <acronym>RTS1</acronym>
        <description>A form of Rothmund-Thomson syndrome, a disorder characterized by sparse hair, eyebrows and eyelashes, juvenile cataracts, and poikiloderma, a genodermatosis presenting with mottled pigmentation, telangiectasia and epidermal atrophy. Additional features are short stature, dysplastic nails, and skeletal and dental abnormalities. RTS1 is an autosomal recessive form not associated with an increased risk of cancer.</description>
        <dbReference type="MIM" id="618625"/>
    </disease>
    <text>The disease is caused by variants affecting the gene represented in this entry.</text>
</comment>
<comment type="similarity">
    <text evidence="8">Belongs to the APC1 family.</text>
</comment>
<accession>Q9H1A4</accession>
<accession>Q2M3H8</accession>
<accession>Q9BSE6</accession>
<accession>Q9H8D0</accession>
<feature type="chain" id="PRO_0000215871" description="Anaphase-promoting complex subunit 1">
    <location>
        <begin position="1"/>
        <end position="1944"/>
    </location>
</feature>
<feature type="repeat" description="PC 1">
    <location>
        <begin position="1297"/>
        <end position="1325"/>
    </location>
</feature>
<feature type="repeat" description="PC 2">
    <location>
        <begin position="1366"/>
        <end position="1404"/>
    </location>
</feature>
<feature type="repeat" description="PC 3">
    <location>
        <begin position="1467"/>
        <end position="1501"/>
    </location>
</feature>
<feature type="repeat" description="PC 4">
    <location>
        <begin position="1520"/>
        <end position="1552"/>
    </location>
</feature>
<feature type="region of interest" description="Disordered" evidence="1">
    <location>
        <begin position="305"/>
        <end position="343"/>
    </location>
</feature>
<feature type="region of interest" description="Disordered" evidence="1">
    <location>
        <begin position="373"/>
        <end position="396"/>
    </location>
</feature>
<feature type="region of interest" description="Disordered" evidence="1">
    <location>
        <begin position="994"/>
        <end position="1016"/>
    </location>
</feature>
<feature type="compositionally biased region" description="Low complexity" evidence="1">
    <location>
        <begin position="323"/>
        <end position="343"/>
    </location>
</feature>
<feature type="compositionally biased region" description="Low complexity" evidence="1">
    <location>
        <begin position="384"/>
        <end position="394"/>
    </location>
</feature>
<feature type="compositionally biased region" description="Polar residues" evidence="1">
    <location>
        <begin position="998"/>
        <end position="1007"/>
    </location>
</feature>
<feature type="modified residue" description="Phosphoserine" evidence="12">
    <location>
        <position position="51"/>
    </location>
</feature>
<feature type="modified residue" description="Phosphoserine" evidence="12 14 15">
    <location>
        <position position="60"/>
    </location>
</feature>
<feature type="modified residue" description="Phosphoserine" evidence="2">
    <location>
        <position position="202"/>
    </location>
</feature>
<feature type="modified residue" description="Phosphoserine" evidence="2">
    <location>
        <position position="286"/>
    </location>
</feature>
<feature type="modified residue" description="Phosphothreonine" evidence="2 12 15 17">
    <location>
        <position position="291"/>
    </location>
</feature>
<feature type="modified residue" description="Phosphoserine" evidence="17">
    <location>
        <position position="313"/>
    </location>
</feature>
<feature type="modified residue" description="Phosphoserine" evidence="12 15">
    <location>
        <position position="341"/>
    </location>
</feature>
<feature type="modified residue" description="Phosphoserine" evidence="17">
    <location>
        <position position="343"/>
    </location>
</feature>
<feature type="modified residue" description="Phosphoserine" evidence="2 11 12 15 17">
    <location>
        <position position="355"/>
    </location>
</feature>
<feature type="modified residue" description="Phosphoserine" evidence="12 17">
    <location>
        <position position="362"/>
    </location>
</feature>
<feature type="modified residue" description="Phosphoserine" evidence="2">
    <location>
        <position position="373"/>
    </location>
</feature>
<feature type="modified residue" description="Phosphoserine" evidence="2 11 13 15 16 17">
    <location>
        <position position="377"/>
    </location>
</feature>
<feature type="modified residue" description="Phosphothreonine" evidence="2">
    <location>
        <position position="537"/>
    </location>
</feature>
<feature type="modified residue" description="Phosphoserine" evidence="12 13 14 15">
    <location>
        <position position="547"/>
    </location>
</feature>
<feature type="modified residue" description="Phosphoserine" evidence="13 14 15">
    <location>
        <position position="555"/>
    </location>
</feature>
<feature type="modified residue" description="Phosphotyrosine" evidence="2">
    <location>
        <position position="571"/>
    </location>
</feature>
<feature type="modified residue" description="Phosphoserine" evidence="15">
    <location>
        <position position="686"/>
    </location>
</feature>
<feature type="modified residue" description="Phosphoserine" evidence="2 14 15 16 17 18">
    <location>
        <position position="688"/>
    </location>
</feature>
<feature type="modified residue" description="Phosphoserine" evidence="17">
    <location>
        <position position="916"/>
    </location>
</feature>
<feature type="sequence conflict" description="In Ref. 3; BAB14687." evidence="8" ref="3">
    <original>M</original>
    <variation>V</variation>
    <location>
        <position position="604"/>
    </location>
</feature>
<feature type="strand" evidence="20">
    <location>
        <begin position="11"/>
        <end position="13"/>
    </location>
</feature>
<feature type="strand" evidence="20">
    <location>
        <begin position="15"/>
        <end position="19"/>
    </location>
</feature>
<feature type="helix" evidence="20">
    <location>
        <begin position="23"/>
        <end position="27"/>
    </location>
</feature>
<feature type="strand" evidence="20">
    <location>
        <begin position="72"/>
        <end position="78"/>
    </location>
</feature>
<feature type="strand" evidence="20">
    <location>
        <begin position="89"/>
        <end position="96"/>
    </location>
</feature>
<feature type="strand" evidence="20">
    <location>
        <begin position="99"/>
        <end position="108"/>
    </location>
</feature>
<feature type="strand" evidence="20">
    <location>
        <begin position="113"/>
        <end position="118"/>
    </location>
</feature>
<feature type="strand" evidence="20">
    <location>
        <begin position="125"/>
        <end position="134"/>
    </location>
</feature>
<feature type="strand" evidence="20">
    <location>
        <begin position="146"/>
        <end position="154"/>
    </location>
</feature>
<feature type="strand" evidence="20">
    <location>
        <begin position="159"/>
        <end position="163"/>
    </location>
</feature>
<feature type="strand" evidence="20">
    <location>
        <begin position="168"/>
        <end position="171"/>
    </location>
</feature>
<feature type="strand" evidence="20">
    <location>
        <begin position="177"/>
        <end position="183"/>
    </location>
</feature>
<feature type="strand" evidence="20">
    <location>
        <begin position="186"/>
        <end position="191"/>
    </location>
</feature>
<feature type="strand" evidence="20">
    <location>
        <begin position="209"/>
        <end position="215"/>
    </location>
</feature>
<feature type="strand" evidence="21">
    <location>
        <begin position="220"/>
        <end position="222"/>
    </location>
</feature>
<feature type="strand" evidence="20">
    <location>
        <begin position="224"/>
        <end position="226"/>
    </location>
</feature>
<feature type="strand" evidence="24">
    <location>
        <begin position="236"/>
        <end position="238"/>
    </location>
</feature>
<feature type="strand" evidence="20">
    <location>
        <begin position="244"/>
        <end position="250"/>
    </location>
</feature>
<feature type="turn" evidence="20">
    <location>
        <begin position="251"/>
        <end position="254"/>
    </location>
</feature>
<feature type="strand" evidence="20">
    <location>
        <begin position="255"/>
        <end position="260"/>
    </location>
</feature>
<feature type="turn" evidence="20">
    <location>
        <begin position="261"/>
        <end position="264"/>
    </location>
</feature>
<feature type="strand" evidence="20">
    <location>
        <begin position="265"/>
        <end position="273"/>
    </location>
</feature>
<feature type="helix" evidence="25">
    <location>
        <begin position="276"/>
        <end position="282"/>
    </location>
</feature>
<feature type="helix" evidence="23">
    <location>
        <begin position="346"/>
        <end position="351"/>
    </location>
</feature>
<feature type="strand" evidence="20">
    <location>
        <begin position="406"/>
        <end position="414"/>
    </location>
</feature>
<feature type="strand" evidence="25">
    <location>
        <begin position="420"/>
        <end position="422"/>
    </location>
</feature>
<feature type="strand" evidence="20">
    <location>
        <begin position="430"/>
        <end position="434"/>
    </location>
</feature>
<feature type="strand" evidence="21">
    <location>
        <begin position="436"/>
        <end position="438"/>
    </location>
</feature>
<feature type="strand" evidence="20">
    <location>
        <begin position="440"/>
        <end position="446"/>
    </location>
</feature>
<feature type="helix" evidence="20">
    <location>
        <begin position="447"/>
        <end position="449"/>
    </location>
</feature>
<feature type="strand" evidence="20">
    <location>
        <begin position="451"/>
        <end position="459"/>
    </location>
</feature>
<feature type="strand" evidence="20">
    <location>
        <begin position="463"/>
        <end position="475"/>
    </location>
</feature>
<feature type="strand" evidence="20">
    <location>
        <begin position="477"/>
        <end position="482"/>
    </location>
</feature>
<feature type="helix" evidence="20">
    <location>
        <begin position="483"/>
        <end position="485"/>
    </location>
</feature>
<feature type="strand" evidence="20">
    <location>
        <begin position="487"/>
        <end position="491"/>
    </location>
</feature>
<feature type="strand" evidence="19">
    <location>
        <begin position="493"/>
        <end position="495"/>
    </location>
</feature>
<feature type="strand" evidence="20">
    <location>
        <begin position="497"/>
        <end position="501"/>
    </location>
</feature>
<feature type="strand" evidence="20">
    <location>
        <begin position="504"/>
        <end position="510"/>
    </location>
</feature>
<feature type="helix" evidence="20">
    <location>
        <begin position="517"/>
        <end position="519"/>
    </location>
</feature>
<feature type="turn" evidence="19">
    <location>
        <begin position="580"/>
        <end position="582"/>
    </location>
</feature>
<feature type="strand" evidence="20">
    <location>
        <begin position="584"/>
        <end position="591"/>
    </location>
</feature>
<feature type="strand" evidence="20">
    <location>
        <begin position="594"/>
        <end position="599"/>
    </location>
</feature>
<feature type="strand" evidence="20">
    <location>
        <begin position="604"/>
        <end position="608"/>
    </location>
</feature>
<feature type="helix" evidence="25">
    <location>
        <begin position="616"/>
        <end position="628"/>
    </location>
</feature>
<feature type="helix" evidence="25">
    <location>
        <begin position="631"/>
        <end position="645"/>
    </location>
</feature>
<feature type="strand" evidence="24">
    <location>
        <begin position="648"/>
        <end position="650"/>
    </location>
</feature>
<feature type="strand" evidence="21">
    <location>
        <begin position="652"/>
        <end position="654"/>
    </location>
</feature>
<feature type="helix" evidence="25">
    <location>
        <begin position="656"/>
        <end position="666"/>
    </location>
</feature>
<feature type="turn" evidence="25">
    <location>
        <begin position="667"/>
        <end position="669"/>
    </location>
</feature>
<feature type="turn" evidence="25">
    <location>
        <begin position="672"/>
        <end position="674"/>
    </location>
</feature>
<feature type="helix" evidence="25">
    <location>
        <begin position="676"/>
        <end position="679"/>
    </location>
</feature>
<feature type="helix" evidence="25">
    <location>
        <begin position="704"/>
        <end position="711"/>
    </location>
</feature>
<feature type="helix" evidence="25">
    <location>
        <begin position="714"/>
        <end position="721"/>
    </location>
</feature>
<feature type="helix" evidence="25">
    <location>
        <begin position="725"/>
        <end position="728"/>
    </location>
</feature>
<feature type="strand" evidence="21">
    <location>
        <begin position="751"/>
        <end position="754"/>
    </location>
</feature>
<feature type="helix" evidence="25">
    <location>
        <begin position="756"/>
        <end position="758"/>
    </location>
</feature>
<feature type="helix" evidence="25">
    <location>
        <begin position="759"/>
        <end position="773"/>
    </location>
</feature>
<feature type="helix" evidence="25">
    <location>
        <begin position="777"/>
        <end position="779"/>
    </location>
</feature>
<feature type="helix" evidence="25">
    <location>
        <begin position="782"/>
        <end position="796"/>
    </location>
</feature>
<feature type="helix" evidence="25">
    <location>
        <begin position="800"/>
        <end position="809"/>
    </location>
</feature>
<feature type="turn" evidence="25">
    <location>
        <begin position="811"/>
        <end position="813"/>
    </location>
</feature>
<feature type="helix" evidence="25">
    <location>
        <begin position="825"/>
        <end position="828"/>
    </location>
</feature>
<feature type="helix" evidence="25">
    <location>
        <begin position="844"/>
        <end position="853"/>
    </location>
</feature>
<feature type="strand" evidence="25">
    <location>
        <begin position="860"/>
        <end position="862"/>
    </location>
</feature>
<feature type="turn" evidence="25">
    <location>
        <begin position="864"/>
        <end position="866"/>
    </location>
</feature>
<feature type="helix" evidence="25">
    <location>
        <begin position="868"/>
        <end position="880"/>
    </location>
</feature>
<feature type="helix" evidence="25">
    <location>
        <begin position="885"/>
        <end position="889"/>
    </location>
</feature>
<feature type="strand" evidence="25">
    <location>
        <begin position="896"/>
        <end position="898"/>
    </location>
</feature>
<feature type="helix" evidence="25">
    <location>
        <begin position="926"/>
        <end position="937"/>
    </location>
</feature>
<feature type="helix" evidence="25">
    <location>
        <begin position="941"/>
        <end position="946"/>
    </location>
</feature>
<feature type="turn" evidence="25">
    <location>
        <begin position="949"/>
        <end position="952"/>
    </location>
</feature>
<feature type="helix" evidence="25">
    <location>
        <begin position="953"/>
        <end position="964"/>
    </location>
</feature>
<feature type="helix" evidence="25">
    <location>
        <begin position="972"/>
        <end position="978"/>
    </location>
</feature>
<feature type="helix" evidence="25">
    <location>
        <begin position="981"/>
        <end position="983"/>
    </location>
</feature>
<feature type="helix" evidence="25">
    <location>
        <begin position="1021"/>
        <end position="1027"/>
    </location>
</feature>
<feature type="turn" evidence="24">
    <location>
        <begin position="1029"/>
        <end position="1031"/>
    </location>
</feature>
<feature type="helix" evidence="25">
    <location>
        <begin position="1033"/>
        <end position="1041"/>
    </location>
</feature>
<feature type="strand" evidence="21">
    <location>
        <begin position="1055"/>
        <end position="1057"/>
    </location>
</feature>
<feature type="helix" evidence="25">
    <location>
        <begin position="1059"/>
        <end position="1077"/>
    </location>
</feature>
<feature type="helix" evidence="25">
    <location>
        <begin position="1080"/>
        <end position="1087"/>
    </location>
</feature>
<feature type="turn" evidence="23">
    <location>
        <begin position="1088"/>
        <end position="1090"/>
    </location>
</feature>
<feature type="strand" evidence="22">
    <location>
        <begin position="1096"/>
        <end position="1098"/>
    </location>
</feature>
<feature type="strand" evidence="25">
    <location>
        <begin position="1109"/>
        <end position="1111"/>
    </location>
</feature>
<feature type="turn" evidence="25">
    <location>
        <begin position="1112"/>
        <end position="1115"/>
    </location>
</feature>
<feature type="strand" evidence="25">
    <location>
        <begin position="1116"/>
        <end position="1118"/>
    </location>
</feature>
<feature type="strand" evidence="22">
    <location>
        <begin position="1120"/>
        <end position="1122"/>
    </location>
</feature>
<feature type="helix" evidence="24">
    <location>
        <begin position="1123"/>
        <end position="1125"/>
    </location>
</feature>
<feature type="turn" evidence="21">
    <location>
        <begin position="1129"/>
        <end position="1132"/>
    </location>
</feature>
<feature type="helix" evidence="25">
    <location>
        <begin position="1133"/>
        <end position="1145"/>
    </location>
</feature>
<feature type="turn" evidence="23">
    <location>
        <begin position="1150"/>
        <end position="1152"/>
    </location>
</feature>
<feature type="helix" evidence="25">
    <location>
        <begin position="1155"/>
        <end position="1160"/>
    </location>
</feature>
<feature type="strand" evidence="25">
    <location>
        <begin position="1164"/>
        <end position="1166"/>
    </location>
</feature>
<feature type="helix" evidence="25">
    <location>
        <begin position="1169"/>
        <end position="1182"/>
    </location>
</feature>
<feature type="helix" evidence="25">
    <location>
        <begin position="1184"/>
        <end position="1187"/>
    </location>
</feature>
<feature type="helix" evidence="25">
    <location>
        <begin position="1190"/>
        <end position="1199"/>
    </location>
</feature>
<feature type="helix" evidence="25">
    <location>
        <begin position="1202"/>
        <end position="1216"/>
    </location>
</feature>
<feature type="strand" evidence="25">
    <location>
        <begin position="1217"/>
        <end position="1219"/>
    </location>
</feature>
<feature type="helix" evidence="25">
    <location>
        <begin position="1222"/>
        <end position="1229"/>
    </location>
</feature>
<feature type="turn" evidence="25">
    <location>
        <begin position="1233"/>
        <end position="1235"/>
    </location>
</feature>
<feature type="helix" evidence="25">
    <location>
        <begin position="1247"/>
        <end position="1260"/>
    </location>
</feature>
<feature type="turn" evidence="25">
    <location>
        <begin position="1261"/>
        <end position="1263"/>
    </location>
</feature>
<feature type="helix" evidence="25">
    <location>
        <begin position="1267"/>
        <end position="1277"/>
    </location>
</feature>
<feature type="strand" evidence="25">
    <location>
        <begin position="1283"/>
        <end position="1287"/>
    </location>
</feature>
<feature type="helix" evidence="25">
    <location>
        <begin position="1291"/>
        <end position="1306"/>
    </location>
</feature>
<feature type="strand" evidence="24">
    <location>
        <begin position="1314"/>
        <end position="1316"/>
    </location>
</feature>
<feature type="turn" evidence="25">
    <location>
        <begin position="1317"/>
        <end position="1320"/>
    </location>
</feature>
<feature type="helix" evidence="25">
    <location>
        <begin position="1321"/>
        <end position="1330"/>
    </location>
</feature>
<feature type="strand" evidence="25">
    <location>
        <begin position="1350"/>
        <end position="1353"/>
    </location>
</feature>
<feature type="helix" evidence="25">
    <location>
        <begin position="1360"/>
        <end position="1374"/>
    </location>
</feature>
<feature type="turn" evidence="25">
    <location>
        <begin position="1375"/>
        <end position="1377"/>
    </location>
</feature>
<feature type="helix" evidence="25">
    <location>
        <begin position="1381"/>
        <end position="1385"/>
    </location>
</feature>
<feature type="strand" evidence="21">
    <location>
        <begin position="1386"/>
        <end position="1388"/>
    </location>
</feature>
<feature type="helix" evidence="25">
    <location>
        <begin position="1393"/>
        <end position="1396"/>
    </location>
</feature>
<feature type="helix" evidence="25">
    <location>
        <begin position="1401"/>
        <end position="1414"/>
    </location>
</feature>
<feature type="helix" evidence="23">
    <location>
        <begin position="1416"/>
        <end position="1418"/>
    </location>
</feature>
<feature type="helix" evidence="25">
    <location>
        <begin position="1423"/>
        <end position="1428"/>
    </location>
</feature>
<feature type="helix" evidence="25">
    <location>
        <begin position="1432"/>
        <end position="1437"/>
    </location>
</feature>
<feature type="strand" evidence="24">
    <location>
        <begin position="1450"/>
        <end position="1452"/>
    </location>
</feature>
<feature type="helix" evidence="25">
    <location>
        <begin position="1454"/>
        <end position="1475"/>
    </location>
</feature>
<feature type="turn" evidence="25">
    <location>
        <begin position="1476"/>
        <end position="1479"/>
    </location>
</feature>
<feature type="helix" evidence="25">
    <location>
        <begin position="1482"/>
        <end position="1499"/>
    </location>
</feature>
<feature type="helix" evidence="25">
    <location>
        <begin position="1504"/>
        <end position="1507"/>
    </location>
</feature>
<feature type="helix" evidence="25">
    <location>
        <begin position="1509"/>
        <end position="1526"/>
    </location>
</feature>
<feature type="turn" evidence="24">
    <location>
        <begin position="1527"/>
        <end position="1529"/>
    </location>
</feature>
<feature type="helix" evidence="25">
    <location>
        <begin position="1533"/>
        <end position="1544"/>
    </location>
</feature>
<feature type="strand" evidence="21">
    <location>
        <begin position="1547"/>
        <end position="1549"/>
    </location>
</feature>
<feature type="helix" evidence="25">
    <location>
        <begin position="1552"/>
        <end position="1565"/>
    </location>
</feature>
<feature type="helix" evidence="25">
    <location>
        <begin position="1567"/>
        <end position="1570"/>
    </location>
</feature>
<feature type="strand" evidence="25">
    <location>
        <begin position="1572"/>
        <end position="1574"/>
    </location>
</feature>
<feature type="helix" evidence="25">
    <location>
        <begin position="1578"/>
        <end position="1587"/>
    </location>
</feature>
<feature type="strand" evidence="21">
    <location>
        <begin position="1594"/>
        <end position="1597"/>
    </location>
</feature>
<feature type="strand" evidence="25">
    <location>
        <begin position="1600"/>
        <end position="1602"/>
    </location>
</feature>
<feature type="helix" evidence="25">
    <location>
        <begin position="1604"/>
        <end position="1613"/>
    </location>
</feature>
<feature type="strand" evidence="25">
    <location>
        <begin position="1614"/>
        <end position="1616"/>
    </location>
</feature>
<feature type="strand" evidence="25">
    <location>
        <begin position="1618"/>
        <end position="1623"/>
    </location>
</feature>
<feature type="turn" evidence="25">
    <location>
        <begin position="1624"/>
        <end position="1627"/>
    </location>
</feature>
<feature type="strand" evidence="25">
    <location>
        <begin position="1632"/>
        <end position="1638"/>
    </location>
</feature>
<feature type="strand" evidence="25">
    <location>
        <begin position="1642"/>
        <end position="1644"/>
    </location>
</feature>
<feature type="strand" evidence="25">
    <location>
        <begin position="1647"/>
        <end position="1656"/>
    </location>
</feature>
<feature type="helix" evidence="25">
    <location>
        <begin position="1660"/>
        <end position="1662"/>
    </location>
</feature>
<feature type="strand" evidence="25">
    <location>
        <begin position="1663"/>
        <end position="1667"/>
    </location>
</feature>
<feature type="strand" evidence="25">
    <location>
        <begin position="1670"/>
        <end position="1673"/>
    </location>
</feature>
<feature type="strand" evidence="25">
    <location>
        <begin position="1677"/>
        <end position="1679"/>
    </location>
</feature>
<feature type="helix" evidence="24">
    <location>
        <begin position="1680"/>
        <end position="1682"/>
    </location>
</feature>
<feature type="helix" evidence="25">
    <location>
        <begin position="1685"/>
        <end position="1692"/>
    </location>
</feature>
<feature type="turn" evidence="25">
    <location>
        <begin position="1693"/>
        <end position="1695"/>
    </location>
</feature>
<feature type="strand" evidence="25">
    <location>
        <begin position="1696"/>
        <end position="1699"/>
    </location>
</feature>
<feature type="turn" evidence="25">
    <location>
        <begin position="1708"/>
        <end position="1710"/>
    </location>
</feature>
<feature type="strand" evidence="23">
    <location>
        <begin position="1714"/>
        <end position="1716"/>
    </location>
</feature>
<feature type="strand" evidence="25">
    <location>
        <begin position="1721"/>
        <end position="1724"/>
    </location>
</feature>
<feature type="helix" evidence="25">
    <location>
        <begin position="1726"/>
        <end position="1732"/>
    </location>
</feature>
<feature type="helix" evidence="25">
    <location>
        <begin position="1735"/>
        <end position="1740"/>
    </location>
</feature>
<feature type="helix" evidence="25">
    <location>
        <begin position="1745"/>
        <end position="1753"/>
    </location>
</feature>
<feature type="helix" evidence="25">
    <location>
        <begin position="1764"/>
        <end position="1780"/>
    </location>
</feature>
<feature type="helix" evidence="25">
    <location>
        <begin position="1784"/>
        <end position="1786"/>
    </location>
</feature>
<feature type="helix" evidence="25">
    <location>
        <begin position="1787"/>
        <end position="1801"/>
    </location>
</feature>
<feature type="helix" evidence="25">
    <location>
        <begin position="1809"/>
        <end position="1820"/>
    </location>
</feature>
<feature type="strand" evidence="19">
    <location>
        <begin position="1821"/>
        <end position="1824"/>
    </location>
</feature>
<feature type="helix" evidence="25">
    <location>
        <begin position="1825"/>
        <end position="1829"/>
    </location>
</feature>
<feature type="turn" evidence="25">
    <location>
        <begin position="1830"/>
        <end position="1832"/>
    </location>
</feature>
<feature type="strand" evidence="19">
    <location>
        <begin position="1836"/>
        <end position="1840"/>
    </location>
</feature>
<feature type="helix" evidence="25">
    <location>
        <begin position="1844"/>
        <end position="1862"/>
    </location>
</feature>
<feature type="helix" evidence="25">
    <location>
        <begin position="1864"/>
        <end position="1873"/>
    </location>
</feature>
<feature type="helix" evidence="25">
    <location>
        <begin position="1879"/>
        <end position="1881"/>
    </location>
</feature>
<feature type="helix" evidence="25">
    <location>
        <begin position="1882"/>
        <end position="1892"/>
    </location>
</feature>
<feature type="helix" evidence="25">
    <location>
        <begin position="1897"/>
        <end position="1899"/>
    </location>
</feature>
<feature type="turn" evidence="23">
    <location>
        <begin position="1905"/>
        <end position="1907"/>
    </location>
</feature>
<feature type="helix" evidence="25">
    <location>
        <begin position="1911"/>
        <end position="1919"/>
    </location>
</feature>
<feature type="turn" evidence="25">
    <location>
        <begin position="1920"/>
        <end position="1922"/>
    </location>
</feature>
<feature type="helix" evidence="25">
    <location>
        <begin position="1925"/>
        <end position="1935"/>
    </location>
</feature>
<sequence length="1944" mass="216500">MSNFYEERTTMIAARDLQEFVPFGRDHCKHHPNALNLQLRQLQPASELWSSDGAAGLVGSLQEVTIHEKQKESWQLRKGVSEIGEDVDYDEELYVAGNMVIWSKGSKSQALAVYKAFTVDSPVQQALWCDFIISQDKSEKAYSSNEVEKCICILQSSCINMHSIEGKDYIASLPFQVANVWPTKYGLLFERSASSHEVPPGSPREPLPTMFSMLHPLDEITPLVCKSGSLFGSSRVQYVVDHAMKIVFLNTDPSIVMTYDAVQNVHSVWTLRRVKSEEENVVLKFSEQGGTPQNVATSSSLTAHLRSLSKGDSPVTSPFQNYSSIHSQSRSTSSPSLHSRSPSISNMAALSRAHSPALGVHSFSGVQRFNISSHNQSPKRHSISHSPNSNSNGSFLAPETEPIVPELCIDHLWTETITNIREKNSQASKVFITSDLCGQKFLCFLVESQLQLRCVKFQESNDKTQLIFGSVTNIPAKDAAPVEKIDTMLVLEGSGNLVLYTGVVRVGKVFIPGLPAPSLTMSNTMPRPSTPLDGVSTPKPLSKLLGSLDEVVLLSPVPELRDSSKLHDSLYNEDCTFQQLGTYIHSIRDPVHNRVTLELSNGSMVRITIPEIATSELVQTCLQAIKFILPKEIAVQMLVKWYNVHSAPGGPSYHSEWNLFVTCLMNMMGYNTDRLAWTRNFDFEGSLSPVIAPKKARPSETGSDDDWEYLLNSDYHQNVESHLLNRSLCLSPSEASQMKDEDFSQNLSLDSSTLLFTHIPAIFFVLHLVYEELKLNTLMGEGICSLVELLVQLARDLKLGPYVDHYYRDYPTLVRTTGQVCTIDPGQTGFMHHPSFFTSEPPSIYQWVSSCLKGEGMPPYPYLPGICERSRLVVLSIALYILGDESLVSDESSQYLTRITIAPQKLQVEQEENRFSFRHSTSVSSLAERLVVWMTNVGFTLRDLETLPFGIALPIRDAIYHCREQPASDWPEAVCLLIGRQDLSKQACEGNLPKGKSVLSSDVPSGTETEEEDDGMNDMNHEVMSLIWSEDLRVQDVRRLLQSAHPVRVNVVQYPELSDHEFIEEKENRLLQLCQRTMALPVGRGMFTLFSYHPVPTEPLPIPKLNLTGRAPPRNTTVDLNSGNIDVPPNMTSWASFHNGVAAGLKIAPASQIDSAWIVYNKPKHAELANEYAGFLMALGLNGHLTKLATLNIHDYLTKGHEMTSIGLLLGVSAAKLGTMDMSITRLLSIHIPALLPPTSTELDVPHNVQVAAVVGIGLVYQGTAHRHTAEVLLAEIGRPPGPEMEYCTDRESYSLAAGLALGMVCLGHGSNLIGMSDLNVPEQLYQYMVGGHRRFQTGMHREKHKSPSYQIKEGDTINVDVTCPGATLALAMIYLKTNNRSIADWLRAPDTMYLLDFVKPEFLLLRTLARCLILWDDILPNSKWVDSNVPQIIRENSISLSEIELPCSEDLNLETLSQAHVYIIAGACLSLGFRFAGSENLSAFNCLHKFAKDFMTYLSAPNASVTGPHNLETCLSVVLLSLAMVMAGSGNLKVLQLCRFLHMKTGGEMNYGFHLAHHMALGLLFLGGGRYSLSTSNSSIAALLCALYPHFPAHSTDNRYHLQALRHLYVLAAEPRLLVPVDVDTNTPCYALLEVTYKGTQWYEQTKEELMAPTLLPELHLLKQIKVKGPRYWELLIDLSKGTQHLKSILSKDGVLYVKLRAGQLSYKEDPMGWQSLLAQTVANRNSEARAFKPETISAFTSDPALLSFAEYFCKPTVNMGQKQEILDLFSSVLYECVTQETPEMLPAYIAMDQAIRRLGRREMSETSELWQIKLVLEFFSSRSHQERLQNHPKRGLFMNSEFLPVVKCTIDNTLDQWLQVGGDMCVHAYLSGQPLEESQLSMLACFLVYHSVPAPQHLPPIGLEGSTSFAELLFKFKQLKMPVRALLRLAPLLLGNPQPMVM</sequence>
<reference key="1">
    <citation type="journal article" date="2001" name="Gene">
        <title>Characterisation of the human APC1, the largest subunit of the anaphase-promoting complex.</title>
        <authorList>
            <person name="Joergensen P.M."/>
            <person name="Graeslund S."/>
            <person name="Betz R."/>
            <person name="Stahl S."/>
            <person name="Larsson C."/>
            <person name="Hoeoeg C."/>
        </authorList>
    </citation>
    <scope>NUCLEOTIDE SEQUENCE [MRNA]</scope>
</reference>
<reference key="2">
    <citation type="journal article" date="2004" name="Genome Res.">
        <title>The status, quality, and expansion of the NIH full-length cDNA project: the Mammalian Gene Collection (MGC).</title>
        <authorList>
            <consortium name="The MGC Project Team"/>
        </authorList>
    </citation>
    <scope>NUCLEOTIDE SEQUENCE [LARGE SCALE MRNA]</scope>
    <source>
        <tissue>Colon</tissue>
        <tissue>Ovary</tissue>
    </source>
</reference>
<reference key="3">
    <citation type="journal article" date="2004" name="Nat. Genet.">
        <title>Complete sequencing and characterization of 21,243 full-length human cDNAs.</title>
        <authorList>
            <person name="Ota T."/>
            <person name="Suzuki Y."/>
            <person name="Nishikawa T."/>
            <person name="Otsuki T."/>
            <person name="Sugiyama T."/>
            <person name="Irie R."/>
            <person name="Wakamatsu A."/>
            <person name="Hayashi K."/>
            <person name="Sato H."/>
            <person name="Nagai K."/>
            <person name="Kimura K."/>
            <person name="Makita H."/>
            <person name="Sekine M."/>
            <person name="Obayashi M."/>
            <person name="Nishi T."/>
            <person name="Shibahara T."/>
            <person name="Tanaka T."/>
            <person name="Ishii S."/>
            <person name="Yamamoto J."/>
            <person name="Saito K."/>
            <person name="Kawai Y."/>
            <person name="Isono Y."/>
            <person name="Nakamura Y."/>
            <person name="Nagahari K."/>
            <person name="Murakami K."/>
            <person name="Yasuda T."/>
            <person name="Iwayanagi T."/>
            <person name="Wagatsuma M."/>
            <person name="Shiratori A."/>
            <person name="Sudo H."/>
            <person name="Hosoiri T."/>
            <person name="Kaku Y."/>
            <person name="Kodaira H."/>
            <person name="Kondo H."/>
            <person name="Sugawara M."/>
            <person name="Takahashi M."/>
            <person name="Kanda K."/>
            <person name="Yokoi T."/>
            <person name="Furuya T."/>
            <person name="Kikkawa E."/>
            <person name="Omura Y."/>
            <person name="Abe K."/>
            <person name="Kamihara K."/>
            <person name="Katsuta N."/>
            <person name="Sato K."/>
            <person name="Tanikawa M."/>
            <person name="Yamazaki M."/>
            <person name="Ninomiya K."/>
            <person name="Ishibashi T."/>
            <person name="Yamashita H."/>
            <person name="Murakawa K."/>
            <person name="Fujimori K."/>
            <person name="Tanai H."/>
            <person name="Kimata M."/>
            <person name="Watanabe M."/>
            <person name="Hiraoka S."/>
            <person name="Chiba Y."/>
            <person name="Ishida S."/>
            <person name="Ono Y."/>
            <person name="Takiguchi S."/>
            <person name="Watanabe S."/>
            <person name="Yosida M."/>
            <person name="Hotuta T."/>
            <person name="Kusano J."/>
            <person name="Kanehori K."/>
            <person name="Takahashi-Fujii A."/>
            <person name="Hara H."/>
            <person name="Tanase T.-O."/>
            <person name="Nomura Y."/>
            <person name="Togiya S."/>
            <person name="Komai F."/>
            <person name="Hara R."/>
            <person name="Takeuchi K."/>
            <person name="Arita M."/>
            <person name="Imose N."/>
            <person name="Musashino K."/>
            <person name="Yuuki H."/>
            <person name="Oshima A."/>
            <person name="Sasaki N."/>
            <person name="Aotsuka S."/>
            <person name="Yoshikawa Y."/>
            <person name="Matsunawa H."/>
            <person name="Ichihara T."/>
            <person name="Shiohata N."/>
            <person name="Sano S."/>
            <person name="Moriya S."/>
            <person name="Momiyama H."/>
            <person name="Satoh N."/>
            <person name="Takami S."/>
            <person name="Terashima Y."/>
            <person name="Suzuki O."/>
            <person name="Nakagawa S."/>
            <person name="Senoh A."/>
            <person name="Mizoguchi H."/>
            <person name="Goto Y."/>
            <person name="Shimizu F."/>
            <person name="Wakebe H."/>
            <person name="Hishigaki H."/>
            <person name="Watanabe T."/>
            <person name="Sugiyama A."/>
            <person name="Takemoto M."/>
            <person name="Kawakami B."/>
            <person name="Yamazaki M."/>
            <person name="Watanabe K."/>
            <person name="Kumagai A."/>
            <person name="Itakura S."/>
            <person name="Fukuzumi Y."/>
            <person name="Fujimori Y."/>
            <person name="Komiyama M."/>
            <person name="Tashiro H."/>
            <person name="Tanigami A."/>
            <person name="Fujiwara T."/>
            <person name="Ono T."/>
            <person name="Yamada K."/>
            <person name="Fujii Y."/>
            <person name="Ozaki K."/>
            <person name="Hirao M."/>
            <person name="Ohmori Y."/>
            <person name="Kawabata A."/>
            <person name="Hikiji T."/>
            <person name="Kobatake N."/>
            <person name="Inagaki H."/>
            <person name="Ikema Y."/>
            <person name="Okamoto S."/>
            <person name="Okitani R."/>
            <person name="Kawakami T."/>
            <person name="Noguchi S."/>
            <person name="Itoh T."/>
            <person name="Shigeta K."/>
            <person name="Senba T."/>
            <person name="Matsumura K."/>
            <person name="Nakajima Y."/>
            <person name="Mizuno T."/>
            <person name="Morinaga M."/>
            <person name="Sasaki M."/>
            <person name="Togashi T."/>
            <person name="Oyama M."/>
            <person name="Hata H."/>
            <person name="Watanabe M."/>
            <person name="Komatsu T."/>
            <person name="Mizushima-Sugano J."/>
            <person name="Satoh T."/>
            <person name="Shirai Y."/>
            <person name="Takahashi Y."/>
            <person name="Nakagawa K."/>
            <person name="Okumura K."/>
            <person name="Nagase T."/>
            <person name="Nomura N."/>
            <person name="Kikuchi H."/>
            <person name="Masuho Y."/>
            <person name="Yamashita R."/>
            <person name="Nakai K."/>
            <person name="Yada T."/>
            <person name="Nakamura Y."/>
            <person name="Ohara O."/>
            <person name="Isogai T."/>
            <person name="Sugano S."/>
        </authorList>
    </citation>
    <scope>NUCLEOTIDE SEQUENCE [LARGE SCALE MRNA] OF 510-1944</scope>
    <source>
        <tissue>Placenta</tissue>
    </source>
</reference>
<reference key="4">
    <citation type="journal article" date="2003" name="EMBO J.">
        <title>Mitotic regulation of the human anaphase-promoting complex by phosphorylation.</title>
        <authorList>
            <person name="Kraft C."/>
            <person name="Herzog F."/>
            <person name="Gieffers C."/>
            <person name="Mechtler K."/>
            <person name="Hagting A."/>
            <person name="Pines J."/>
            <person name="Peters J.-M."/>
        </authorList>
    </citation>
    <scope>PHOSPHORYLATION AT SER-202; SER-286; THR-291; SER-355; SER-373; SER-377; THR-537; TYR-571 AND SER-688</scope>
</reference>
<reference key="5">
    <citation type="journal article" date="2008" name="Cell">
        <title>Mechanism of ubiquitin-chain formation by the human anaphase-promoting complex.</title>
        <authorList>
            <person name="Jin L."/>
            <person name="Williamson A."/>
            <person name="Banerjee S."/>
            <person name="Philipp I."/>
            <person name="Rape M."/>
        </authorList>
    </citation>
    <scope>FUNCTION OF THE APC/C</scope>
</reference>
<reference key="6">
    <citation type="journal article" date="2008" name="J. Proteome Res.">
        <title>Combining protein-based IMAC, peptide-based IMAC, and MudPIT for efficient phosphoproteomic analysis.</title>
        <authorList>
            <person name="Cantin G.T."/>
            <person name="Yi W."/>
            <person name="Lu B."/>
            <person name="Park S.K."/>
            <person name="Xu T."/>
            <person name="Lee J.-D."/>
            <person name="Yates J.R. III"/>
        </authorList>
    </citation>
    <scope>PHOSPHORYLATION [LARGE SCALE ANALYSIS] AT SER-355 AND SER-377</scope>
    <scope>IDENTIFICATION BY MASS SPECTROMETRY [LARGE SCALE ANALYSIS]</scope>
    <source>
        <tissue>Cervix carcinoma</tissue>
    </source>
</reference>
<reference key="7">
    <citation type="journal article" date="2008" name="Mol. Cell">
        <title>Kinase-selective enrichment enables quantitative phosphoproteomics of the kinome across the cell cycle.</title>
        <authorList>
            <person name="Daub H."/>
            <person name="Olsen J.V."/>
            <person name="Bairlein M."/>
            <person name="Gnad F."/>
            <person name="Oppermann F.S."/>
            <person name="Korner R."/>
            <person name="Greff Z."/>
            <person name="Keri G."/>
            <person name="Stemmann O."/>
            <person name="Mann M."/>
        </authorList>
    </citation>
    <scope>PHOSPHORYLATION [LARGE SCALE ANALYSIS] AT SER-377; SER-547 AND SER-555</scope>
    <scope>IDENTIFICATION BY MASS SPECTROMETRY [LARGE SCALE ANALYSIS]</scope>
    <source>
        <tissue>Cervix carcinoma</tissue>
    </source>
</reference>
<reference key="8">
    <citation type="journal article" date="2008" name="Proc. Natl. Acad. Sci. U.S.A.">
        <title>A quantitative atlas of mitotic phosphorylation.</title>
        <authorList>
            <person name="Dephoure N."/>
            <person name="Zhou C."/>
            <person name="Villen J."/>
            <person name="Beausoleil S.A."/>
            <person name="Bakalarski C.E."/>
            <person name="Elledge S.J."/>
            <person name="Gygi S.P."/>
        </authorList>
    </citation>
    <scope>PHOSPHORYLATION [LARGE SCALE ANALYSIS] AT SER-51; SER-60; THR-291; SER-341; SER-355; SER-362 AND SER-547</scope>
    <scope>IDENTIFICATION BY MASS SPECTROMETRY [LARGE SCALE ANALYSIS]</scope>
    <source>
        <tissue>Cervix carcinoma</tissue>
    </source>
</reference>
<reference key="9">
    <citation type="journal article" date="2009" name="Mol. Cell. Proteomics">
        <title>Large-scale proteomics analysis of the human kinome.</title>
        <authorList>
            <person name="Oppermann F.S."/>
            <person name="Gnad F."/>
            <person name="Olsen J.V."/>
            <person name="Hornberger R."/>
            <person name="Greff Z."/>
            <person name="Keri G."/>
            <person name="Mann M."/>
            <person name="Daub H."/>
        </authorList>
    </citation>
    <scope>IDENTIFICATION BY MASS SPECTROMETRY [LARGE SCALE ANALYSIS]</scope>
</reference>
<reference key="10">
    <citation type="journal article" date="2009" name="Sci. Signal.">
        <title>Quantitative phosphoproteomic analysis of T cell receptor signaling reveals system-wide modulation of protein-protein interactions.</title>
        <authorList>
            <person name="Mayya V."/>
            <person name="Lundgren D.H."/>
            <person name="Hwang S.-I."/>
            <person name="Rezaul K."/>
            <person name="Wu L."/>
            <person name="Eng J.K."/>
            <person name="Rodionov V."/>
            <person name="Han D.K."/>
        </authorList>
    </citation>
    <scope>PHOSPHORYLATION [LARGE SCALE ANALYSIS] AT SER-60; SER-547; SER-555 AND SER-688</scope>
    <scope>IDENTIFICATION BY MASS SPECTROMETRY [LARGE SCALE ANALYSIS]</scope>
    <source>
        <tissue>Leukemic T-cell</tissue>
    </source>
</reference>
<reference key="11">
    <citation type="journal article" date="2010" name="Sci. Signal.">
        <title>Quantitative phosphoproteomics reveals widespread full phosphorylation site occupancy during mitosis.</title>
        <authorList>
            <person name="Olsen J.V."/>
            <person name="Vermeulen M."/>
            <person name="Santamaria A."/>
            <person name="Kumar C."/>
            <person name="Miller M.L."/>
            <person name="Jensen L.J."/>
            <person name="Gnad F."/>
            <person name="Cox J."/>
            <person name="Jensen T.S."/>
            <person name="Nigg E.A."/>
            <person name="Brunak S."/>
            <person name="Mann M."/>
        </authorList>
    </citation>
    <scope>PHOSPHORYLATION [LARGE SCALE ANALYSIS] AT SER-60; THR-291; SER-341; SER-355; SER-377; SER-547; SER-555; SER-686 AND SER-688</scope>
    <scope>IDENTIFICATION BY MASS SPECTROMETRY [LARGE SCALE ANALYSIS]</scope>
    <source>
        <tissue>Cervix carcinoma</tissue>
    </source>
</reference>
<reference key="12">
    <citation type="journal article" date="2011" name="BMC Syst. Biol.">
        <title>Initial characterization of the human central proteome.</title>
        <authorList>
            <person name="Burkard T.R."/>
            <person name="Planyavsky M."/>
            <person name="Kaupe I."/>
            <person name="Breitwieser F.P."/>
            <person name="Buerckstuemmer T."/>
            <person name="Bennett K.L."/>
            <person name="Superti-Furga G."/>
            <person name="Colinge J."/>
        </authorList>
    </citation>
    <scope>IDENTIFICATION BY MASS SPECTROMETRY [LARGE SCALE ANALYSIS]</scope>
</reference>
<reference key="13">
    <citation type="journal article" date="2011" name="Sci. Signal.">
        <title>System-wide temporal characterization of the proteome and phosphoproteome of human embryonic stem cell differentiation.</title>
        <authorList>
            <person name="Rigbolt K.T."/>
            <person name="Prokhorova T.A."/>
            <person name="Akimov V."/>
            <person name="Henningsen J."/>
            <person name="Johansen P.T."/>
            <person name="Kratchmarova I."/>
            <person name="Kassem M."/>
            <person name="Mann M."/>
            <person name="Olsen J.V."/>
            <person name="Blagoev B."/>
        </authorList>
    </citation>
    <scope>PHOSPHORYLATION [LARGE SCALE ANALYSIS] AT SER-377 AND SER-688</scope>
    <scope>IDENTIFICATION BY MASS SPECTROMETRY [LARGE SCALE ANALYSIS]</scope>
</reference>
<reference key="14">
    <citation type="journal article" date="2013" name="J. Proteome Res.">
        <title>Toward a comprehensive characterization of a human cancer cell phosphoproteome.</title>
        <authorList>
            <person name="Zhou H."/>
            <person name="Di Palma S."/>
            <person name="Preisinger C."/>
            <person name="Peng M."/>
            <person name="Polat A.N."/>
            <person name="Heck A.J."/>
            <person name="Mohammed S."/>
        </authorList>
    </citation>
    <scope>PHOSPHORYLATION [LARGE SCALE ANALYSIS] AT THR-291; SER-313; SER-343; SER-355; SER-362; SER-377; SER-688 AND SER-916</scope>
    <scope>IDENTIFICATION BY MASS SPECTROMETRY [LARGE SCALE ANALYSIS]</scope>
    <source>
        <tissue>Cervix carcinoma</tissue>
        <tissue>Erythroleukemia</tissue>
    </source>
</reference>
<reference key="15">
    <citation type="journal article" date="2014" name="J. Proteomics">
        <title>An enzyme assisted RP-RPLC approach for in-depth analysis of human liver phosphoproteome.</title>
        <authorList>
            <person name="Bian Y."/>
            <person name="Song C."/>
            <person name="Cheng K."/>
            <person name="Dong M."/>
            <person name="Wang F."/>
            <person name="Huang J."/>
            <person name="Sun D."/>
            <person name="Wang L."/>
            <person name="Ye M."/>
            <person name="Zou H."/>
        </authorList>
    </citation>
    <scope>PHOSPHORYLATION [LARGE SCALE ANALYSIS] AT SER-688</scope>
    <scope>IDENTIFICATION BY MASS SPECTROMETRY [LARGE SCALE ANALYSIS]</scope>
    <source>
        <tissue>Liver</tissue>
    </source>
</reference>
<reference key="16">
    <citation type="journal article" date="2005" name="Mol. Cell">
        <title>Localization of the coactivator Cdh1 and the cullin subunit Apc2 in a cryo-electron microscopy model of vertebrate APC/C.</title>
        <authorList>
            <person name="Dube P."/>
            <person name="Herzog F."/>
            <person name="Gieffers C."/>
            <person name="Sander B."/>
            <person name="Riedel D."/>
            <person name="Mueller S.A."/>
            <person name="Engel A."/>
            <person name="Peters J.-M."/>
            <person name="Stark H."/>
        </authorList>
    </citation>
    <scope>ELECTRON MICROSCOPY OF THE APC/C</scope>
</reference>
<reference key="17">
    <citation type="journal article" date="2017" name="Cell">
        <title>Assembly and function of heterotypic ubiquitin chains in cell-cycle and protein quality control.</title>
        <authorList>
            <person name="Yau R.G."/>
            <person name="Doerner K."/>
            <person name="Castellanos E.R."/>
            <person name="Haakonsen D.L."/>
            <person name="Werner A."/>
            <person name="Wang N."/>
            <person name="Yang X.W."/>
            <person name="Martinez-Martin N."/>
            <person name="Matsumoto M.L."/>
            <person name="Dixit V.M."/>
            <person name="Rape M."/>
        </authorList>
    </citation>
    <scope>FUNCTION</scope>
    <scope>PATHWAY</scope>
</reference>
<reference key="18">
    <citation type="journal article" date="2019" name="Am. J. Hum. Genet.">
        <title>Mutations in ANAPC1, encoding a scaffold subunit of the anaphase-promoting complex, cause Rothmund-Thomson syndrome type 1.</title>
        <authorList>
            <person name="Ajeawung N.F."/>
            <person name="Nguyen T.T.M."/>
            <person name="Lu L."/>
            <person name="Kucharski T.J."/>
            <person name="Rousseau J."/>
            <person name="Molidperee S."/>
            <person name="Atienza J."/>
            <person name="Gamache I."/>
            <person name="Jin W."/>
            <person name="Plon S.E."/>
            <person name="Lee B.H."/>
            <person name="Teodoro J.G."/>
            <person name="Wang L.L."/>
            <person name="Campeau P.M."/>
        </authorList>
    </citation>
    <scope>INVOLVEMENT IN RTS1</scope>
</reference>
<reference key="19">
    <citation type="journal article" date="2014" name="Nature">
        <title>Molecular architecture and mechanism of the anaphase-promoting complex.</title>
        <authorList>
            <person name="Chang L."/>
            <person name="Zhang Z."/>
            <person name="Yang J."/>
            <person name="McLaughlin S.H."/>
            <person name="Barford D."/>
        </authorList>
    </citation>
    <scope>STRUCTURE BY ELECTRON MICROSCOPY (7.4 ANGSTROMS) OF THE APC/C</scope>
    <scope>SUBUNIT</scope>
</reference>
<reference evidence="9 10" key="20">
    <citation type="journal article" date="2015" name="Nature">
        <title>Atomic structure of the APC/C and its mechanism of protein ubiquitination.</title>
        <authorList>
            <person name="Chang L."/>
            <person name="Zhang Z."/>
            <person name="Yang J."/>
            <person name="McLaughlin S.H."/>
            <person name="Barford D."/>
        </authorList>
    </citation>
    <scope>STRUCTURE BY ELECTRON MICROSCOPY (3.60 ANGSTROMS) OF APC/C</scope>
    <scope>SUBUNIT</scope>
</reference>
<dbReference type="EMBL" id="AJ278357">
    <property type="protein sequence ID" value="CAC19484.1"/>
    <property type="molecule type" value="mRNA"/>
</dbReference>
<dbReference type="EMBL" id="BC005089">
    <property type="protein sequence ID" value="AAH05089.1"/>
    <property type="molecule type" value="mRNA"/>
</dbReference>
<dbReference type="EMBL" id="BC104902">
    <property type="protein sequence ID" value="AAI04903.1"/>
    <property type="molecule type" value="mRNA"/>
</dbReference>
<dbReference type="EMBL" id="BC104904">
    <property type="protein sequence ID" value="AAI04905.1"/>
    <property type="molecule type" value="mRNA"/>
</dbReference>
<dbReference type="EMBL" id="AK023807">
    <property type="protein sequence ID" value="BAB14687.1"/>
    <property type="molecule type" value="mRNA"/>
</dbReference>
<dbReference type="CCDS" id="CCDS2093.1"/>
<dbReference type="RefSeq" id="NP_073153.1">
    <property type="nucleotide sequence ID" value="NM_022662.4"/>
</dbReference>
<dbReference type="PDB" id="4UI9">
    <property type="method" value="EM"/>
    <property type="resolution" value="3.60 A"/>
    <property type="chains" value="A=1-1944"/>
</dbReference>
<dbReference type="PDB" id="5A31">
    <property type="method" value="EM"/>
    <property type="resolution" value="4.30 A"/>
    <property type="chains" value="A=11-1897"/>
</dbReference>
<dbReference type="PDB" id="5G04">
    <property type="method" value="EM"/>
    <property type="resolution" value="4.00 A"/>
    <property type="chains" value="A=1-1943"/>
</dbReference>
<dbReference type="PDB" id="5G05">
    <property type="method" value="EM"/>
    <property type="resolution" value="3.40 A"/>
    <property type="chains" value="A=1-1944"/>
</dbReference>
<dbReference type="PDB" id="5KHR">
    <property type="method" value="EM"/>
    <property type="resolution" value="6.10 A"/>
    <property type="chains" value="A=1-1944"/>
</dbReference>
<dbReference type="PDB" id="5KHU">
    <property type="method" value="EM"/>
    <property type="resolution" value="4.80 A"/>
    <property type="chains" value="A=1-1944"/>
</dbReference>
<dbReference type="PDB" id="5L9T">
    <property type="method" value="EM"/>
    <property type="resolution" value="6.40 A"/>
    <property type="chains" value="A=1-1944"/>
</dbReference>
<dbReference type="PDB" id="5L9U">
    <property type="method" value="EM"/>
    <property type="resolution" value="6.40 A"/>
    <property type="chains" value="A=1-1944"/>
</dbReference>
<dbReference type="PDB" id="5LCW">
    <property type="method" value="EM"/>
    <property type="resolution" value="4.00 A"/>
    <property type="chains" value="A=1-1944"/>
</dbReference>
<dbReference type="PDB" id="5LGG">
    <property type="method" value="X-ray"/>
    <property type="resolution" value="2.15 A"/>
    <property type="chains" value="A=1-33, A=70-306, A=403-613"/>
</dbReference>
<dbReference type="PDB" id="6Q6G">
    <property type="method" value="EM"/>
    <property type="resolution" value="3.20 A"/>
    <property type="chains" value="A=1-306, A=397-1944"/>
</dbReference>
<dbReference type="PDB" id="6Q6H">
    <property type="method" value="EM"/>
    <property type="resolution" value="3.20 A"/>
    <property type="chains" value="A=1-1944"/>
</dbReference>
<dbReference type="PDB" id="6TLJ">
    <property type="method" value="EM"/>
    <property type="resolution" value="3.80 A"/>
    <property type="chains" value="A=1-1944"/>
</dbReference>
<dbReference type="PDB" id="6TM5">
    <property type="method" value="EM"/>
    <property type="resolution" value="3.90 A"/>
    <property type="chains" value="A=1-1944"/>
</dbReference>
<dbReference type="PDB" id="6TNT">
    <property type="method" value="EM"/>
    <property type="resolution" value="3.78 A"/>
    <property type="chains" value="A=1-1944"/>
</dbReference>
<dbReference type="PDB" id="8PKP">
    <property type="method" value="EM"/>
    <property type="resolution" value="3.20 A"/>
    <property type="chains" value="A=1-1944"/>
</dbReference>
<dbReference type="PDB" id="8TAR">
    <property type="method" value="EM"/>
    <property type="resolution" value="4.00 A"/>
    <property type="chains" value="A=1-1944"/>
</dbReference>
<dbReference type="PDB" id="8TAU">
    <property type="method" value="EM"/>
    <property type="resolution" value="3.50 A"/>
    <property type="chains" value="A=1-1944"/>
</dbReference>
<dbReference type="PDB" id="9GAW">
    <property type="method" value="EM"/>
    <property type="resolution" value="2.90 A"/>
    <property type="chains" value="A=1-1944"/>
</dbReference>
<dbReference type="PDBsum" id="4UI9"/>
<dbReference type="PDBsum" id="5A31"/>
<dbReference type="PDBsum" id="5G04"/>
<dbReference type="PDBsum" id="5G05"/>
<dbReference type="PDBsum" id="5KHR"/>
<dbReference type="PDBsum" id="5KHU"/>
<dbReference type="PDBsum" id="5L9T"/>
<dbReference type="PDBsum" id="5L9U"/>
<dbReference type="PDBsum" id="5LCW"/>
<dbReference type="PDBsum" id="5LGG"/>
<dbReference type="PDBsum" id="6Q6G"/>
<dbReference type="PDBsum" id="6Q6H"/>
<dbReference type="PDBsum" id="6TLJ"/>
<dbReference type="PDBsum" id="6TM5"/>
<dbReference type="PDBsum" id="6TNT"/>
<dbReference type="PDBsum" id="8PKP"/>
<dbReference type="PDBsum" id="8TAR"/>
<dbReference type="PDBsum" id="8TAU"/>
<dbReference type="PDBsum" id="9GAW"/>
<dbReference type="EMDB" id="EMD-10516"/>
<dbReference type="EMDB" id="EMD-10518"/>
<dbReference type="EMDB" id="EMD-10536"/>
<dbReference type="EMDB" id="EMD-13931"/>
<dbReference type="EMDB" id="EMD-17751"/>
<dbReference type="EMDB" id="EMD-19711"/>
<dbReference type="EMDB" id="EMD-2924"/>
<dbReference type="EMDB" id="EMD-2925"/>
<dbReference type="EMDB" id="EMD-3385"/>
<dbReference type="EMDB" id="EMD-3386"/>
<dbReference type="EMDB" id="EMD-3387"/>
<dbReference type="EMDB" id="EMD-3388"/>
<dbReference type="EMDB" id="EMD-3389"/>
<dbReference type="EMDB" id="EMD-3390"/>
<dbReference type="EMDB" id="EMD-4037"/>
<dbReference type="EMDB" id="EMD-41140"/>
<dbReference type="EMDB" id="EMD-41142"/>
<dbReference type="EMDB" id="EMD-4465"/>
<dbReference type="EMDB" id="EMD-4466"/>
<dbReference type="EMDB" id="EMD-4467"/>
<dbReference type="EMDB" id="EMD-51190"/>
<dbReference type="SMR" id="Q9H1A4"/>
<dbReference type="BioGRID" id="122229">
    <property type="interactions" value="201"/>
</dbReference>
<dbReference type="ComplexPortal" id="CPX-1860">
    <property type="entry name" value="Anaphase-promoting core complex"/>
</dbReference>
<dbReference type="CORUM" id="Q9H1A4"/>
<dbReference type="DIP" id="DIP-32940N"/>
<dbReference type="FunCoup" id="Q9H1A4">
    <property type="interactions" value="3841"/>
</dbReference>
<dbReference type="IntAct" id="Q9H1A4">
    <property type="interactions" value="92"/>
</dbReference>
<dbReference type="MINT" id="Q9H1A4"/>
<dbReference type="STRING" id="9606.ENSP00000339109"/>
<dbReference type="GlyCosmos" id="Q9H1A4">
    <property type="glycosylation" value="1 site, 1 glycan"/>
</dbReference>
<dbReference type="GlyGen" id="Q9H1A4">
    <property type="glycosylation" value="3 sites, 1 O-linked glycan (3 sites)"/>
</dbReference>
<dbReference type="iPTMnet" id="Q9H1A4"/>
<dbReference type="PhosphoSitePlus" id="Q9H1A4"/>
<dbReference type="SwissPalm" id="Q9H1A4"/>
<dbReference type="BioMuta" id="ANAPC1"/>
<dbReference type="DMDM" id="37537845"/>
<dbReference type="jPOST" id="Q9H1A4"/>
<dbReference type="MassIVE" id="Q9H1A4"/>
<dbReference type="PaxDb" id="9606-ENSP00000339109"/>
<dbReference type="PeptideAtlas" id="Q9H1A4"/>
<dbReference type="ProteomicsDB" id="80384"/>
<dbReference type="Pumba" id="Q9H1A4"/>
<dbReference type="Antibodypedia" id="18056">
    <property type="antibodies" value="473 antibodies from 36 providers"/>
</dbReference>
<dbReference type="DNASU" id="64682"/>
<dbReference type="Ensembl" id="ENST00000341068.8">
    <property type="protein sequence ID" value="ENSP00000339109.3"/>
    <property type="gene ID" value="ENSG00000153107.13"/>
</dbReference>
<dbReference type="GeneID" id="64682"/>
<dbReference type="KEGG" id="hsa:64682"/>
<dbReference type="MANE-Select" id="ENST00000341068.8">
    <property type="protein sequence ID" value="ENSP00000339109.3"/>
    <property type="RefSeq nucleotide sequence ID" value="NM_022662.4"/>
    <property type="RefSeq protein sequence ID" value="NP_073153.1"/>
</dbReference>
<dbReference type="UCSC" id="uc002thi.4">
    <property type="organism name" value="human"/>
</dbReference>
<dbReference type="AGR" id="HGNC:19988"/>
<dbReference type="CTD" id="64682"/>
<dbReference type="DisGeNET" id="64682"/>
<dbReference type="GeneCards" id="ANAPC1"/>
<dbReference type="GeneReviews" id="ANAPC1"/>
<dbReference type="HGNC" id="HGNC:19988">
    <property type="gene designation" value="ANAPC1"/>
</dbReference>
<dbReference type="HPA" id="ENSG00000153107">
    <property type="expression patterns" value="Low tissue specificity"/>
</dbReference>
<dbReference type="MalaCards" id="ANAPC1"/>
<dbReference type="MIM" id="608473">
    <property type="type" value="gene"/>
</dbReference>
<dbReference type="MIM" id="618625">
    <property type="type" value="phenotype"/>
</dbReference>
<dbReference type="neXtProt" id="NX_Q9H1A4"/>
<dbReference type="OpenTargets" id="ENSG00000153107"/>
<dbReference type="Orphanet" id="221008">
    <property type="disease" value="Rothmund-Thomson syndrome type 1"/>
</dbReference>
<dbReference type="PharmGKB" id="PA134907013"/>
<dbReference type="VEuPathDB" id="HostDB:ENSG00000153107"/>
<dbReference type="eggNOG" id="KOG1858">
    <property type="taxonomic scope" value="Eukaryota"/>
</dbReference>
<dbReference type="GeneTree" id="ENSGT00390000016757"/>
<dbReference type="InParanoid" id="Q9H1A4"/>
<dbReference type="OMA" id="MQPPDSR"/>
<dbReference type="OrthoDB" id="26401at2759"/>
<dbReference type="PAN-GO" id="Q9H1A4">
    <property type="GO annotations" value="5 GO annotations based on evolutionary models"/>
</dbReference>
<dbReference type="PhylomeDB" id="Q9H1A4"/>
<dbReference type="TreeFam" id="TF105441"/>
<dbReference type="PathwayCommons" id="Q9H1A4"/>
<dbReference type="Reactome" id="R-HSA-141430">
    <property type="pathway name" value="Inactivation of APC/C via direct inhibition of the APC/C complex"/>
</dbReference>
<dbReference type="Reactome" id="R-HSA-174048">
    <property type="pathway name" value="APC/C:Cdc20 mediated degradation of Cyclin B"/>
</dbReference>
<dbReference type="Reactome" id="R-HSA-174084">
    <property type="pathway name" value="Autodegradation of Cdh1 by Cdh1:APC/C"/>
</dbReference>
<dbReference type="Reactome" id="R-HSA-174154">
    <property type="pathway name" value="APC/C:Cdc20 mediated degradation of Securin"/>
</dbReference>
<dbReference type="Reactome" id="R-HSA-174178">
    <property type="pathway name" value="APC/C:Cdh1 mediated degradation of Cdc20 and other APC/C:Cdh1 targeted proteins in late mitosis/early G1"/>
</dbReference>
<dbReference type="Reactome" id="R-HSA-174184">
    <property type="pathway name" value="Cdc20:Phospho-APC/C mediated degradation of Cyclin A"/>
</dbReference>
<dbReference type="Reactome" id="R-HSA-176407">
    <property type="pathway name" value="Conversion from APC/C:Cdc20 to APC/C:Cdh1 in late anaphase"/>
</dbReference>
<dbReference type="Reactome" id="R-HSA-176408">
    <property type="pathway name" value="Regulation of APC/C activators between G1/S and early anaphase"/>
</dbReference>
<dbReference type="Reactome" id="R-HSA-176409">
    <property type="pathway name" value="APC/C:Cdc20 mediated degradation of mitotic proteins"/>
</dbReference>
<dbReference type="Reactome" id="R-HSA-176412">
    <property type="pathway name" value="Phosphorylation of the APC/C"/>
</dbReference>
<dbReference type="Reactome" id="R-HSA-179409">
    <property type="pathway name" value="APC-Cdc20 mediated degradation of Nek2A"/>
</dbReference>
<dbReference type="Reactome" id="R-HSA-2467813">
    <property type="pathway name" value="Separation of Sister Chromatids"/>
</dbReference>
<dbReference type="Reactome" id="R-HSA-2559582">
    <property type="pathway name" value="Senescence-Associated Secretory Phenotype (SASP)"/>
</dbReference>
<dbReference type="Reactome" id="R-HSA-68867">
    <property type="pathway name" value="Assembly of the pre-replicative complex"/>
</dbReference>
<dbReference type="Reactome" id="R-HSA-69017">
    <property type="pathway name" value="CDK-mediated phosphorylation and removal of Cdc6"/>
</dbReference>
<dbReference type="Reactome" id="R-HSA-8853884">
    <property type="pathway name" value="Transcriptional Regulation by VENTX"/>
</dbReference>
<dbReference type="Reactome" id="R-HSA-9687136">
    <property type="pathway name" value="Aberrant regulation of mitotic exit in cancer due to RB1 defects"/>
</dbReference>
<dbReference type="Reactome" id="R-HSA-983168">
    <property type="pathway name" value="Antigen processing: Ubiquitination &amp; Proteasome degradation"/>
</dbReference>
<dbReference type="SignaLink" id="Q9H1A4"/>
<dbReference type="SIGNOR" id="Q9H1A4"/>
<dbReference type="UniPathway" id="UPA00143"/>
<dbReference type="BioGRID-ORCS" id="64682">
    <property type="hits" value="751 hits in 1128 CRISPR screens"/>
</dbReference>
<dbReference type="CD-CODE" id="8C2F96ED">
    <property type="entry name" value="Centrosome"/>
</dbReference>
<dbReference type="ChiTaRS" id="ANAPC1">
    <property type="organism name" value="human"/>
</dbReference>
<dbReference type="EvolutionaryTrace" id="Q9H1A4"/>
<dbReference type="GeneWiki" id="ANAPC1"/>
<dbReference type="GenomeRNAi" id="64682"/>
<dbReference type="Pharos" id="Q9H1A4">
    <property type="development level" value="Tbio"/>
</dbReference>
<dbReference type="PRO" id="PR:Q9H1A4"/>
<dbReference type="Proteomes" id="UP000005640">
    <property type="component" value="Chromosome 2"/>
</dbReference>
<dbReference type="RNAct" id="Q9H1A4">
    <property type="molecule type" value="protein"/>
</dbReference>
<dbReference type="Bgee" id="ENSG00000153107">
    <property type="expression patterns" value="Expressed in primordial germ cell in gonad and 136 other cell types or tissues"/>
</dbReference>
<dbReference type="ExpressionAtlas" id="Q9H1A4">
    <property type="expression patterns" value="baseline and differential"/>
</dbReference>
<dbReference type="GO" id="GO:0005680">
    <property type="term" value="C:anaphase-promoting complex"/>
    <property type="evidence" value="ECO:0000314"/>
    <property type="project" value="UniProtKB"/>
</dbReference>
<dbReference type="GO" id="GO:0005829">
    <property type="term" value="C:cytosol"/>
    <property type="evidence" value="ECO:0000304"/>
    <property type="project" value="Reactome"/>
</dbReference>
<dbReference type="GO" id="GO:0005654">
    <property type="term" value="C:nucleoplasm"/>
    <property type="evidence" value="ECO:0000304"/>
    <property type="project" value="Reactome"/>
</dbReference>
<dbReference type="GO" id="GO:0060090">
    <property type="term" value="F:molecular adaptor activity"/>
    <property type="evidence" value="ECO:0000318"/>
    <property type="project" value="GO_Central"/>
</dbReference>
<dbReference type="GO" id="GO:0031145">
    <property type="term" value="P:anaphase-promoting complex-dependent catabolic process"/>
    <property type="evidence" value="ECO:0000314"/>
    <property type="project" value="UniProtKB"/>
</dbReference>
<dbReference type="GO" id="GO:0051301">
    <property type="term" value="P:cell division"/>
    <property type="evidence" value="ECO:0007669"/>
    <property type="project" value="UniProtKB-KW"/>
</dbReference>
<dbReference type="GO" id="GO:0007091">
    <property type="term" value="P:metaphase/anaphase transition of mitotic cell cycle"/>
    <property type="evidence" value="ECO:0000318"/>
    <property type="project" value="GO_Central"/>
</dbReference>
<dbReference type="GO" id="GO:0141198">
    <property type="term" value="P:protein branched polyubiquitination"/>
    <property type="evidence" value="ECO:0000314"/>
    <property type="project" value="UniProtKB"/>
</dbReference>
<dbReference type="GO" id="GO:0070979">
    <property type="term" value="P:protein K11-linked ubiquitination"/>
    <property type="evidence" value="ECO:0000314"/>
    <property type="project" value="UniProtKB"/>
</dbReference>
<dbReference type="GO" id="GO:0070936">
    <property type="term" value="P:protein K48-linked ubiquitination"/>
    <property type="evidence" value="ECO:0000314"/>
    <property type="project" value="UniProtKB"/>
</dbReference>
<dbReference type="GO" id="GO:0051445">
    <property type="term" value="P:regulation of meiotic cell cycle"/>
    <property type="evidence" value="ECO:0000303"/>
    <property type="project" value="ComplexPortal"/>
</dbReference>
<dbReference type="GO" id="GO:0007346">
    <property type="term" value="P:regulation of mitotic cell cycle"/>
    <property type="evidence" value="ECO:0000303"/>
    <property type="project" value="ComplexPortal"/>
</dbReference>
<dbReference type="FunFam" id="1.25.10.10:FF:000075">
    <property type="entry name" value="Anaphase promoting complex subunit 1"/>
    <property type="match status" value="1"/>
</dbReference>
<dbReference type="FunFam" id="1.25.10.10:FF:000103">
    <property type="entry name" value="Anaphase promoting complex subunit 1"/>
    <property type="match status" value="1"/>
</dbReference>
<dbReference type="Gene3D" id="1.25.10.10">
    <property type="entry name" value="Leucine-rich Repeat Variant"/>
    <property type="match status" value="2"/>
</dbReference>
<dbReference type="InterPro" id="IPR024990">
    <property type="entry name" value="Apc1"/>
</dbReference>
<dbReference type="InterPro" id="IPR048971">
    <property type="entry name" value="Apc1_3rd"/>
</dbReference>
<dbReference type="InterPro" id="IPR041221">
    <property type="entry name" value="APC1_C"/>
</dbReference>
<dbReference type="InterPro" id="IPR046794">
    <property type="entry name" value="Apc1_MidN"/>
</dbReference>
<dbReference type="InterPro" id="IPR049255">
    <property type="entry name" value="Apc1_N"/>
</dbReference>
<dbReference type="InterPro" id="IPR011989">
    <property type="entry name" value="ARM-like"/>
</dbReference>
<dbReference type="PANTHER" id="PTHR12827:SF3">
    <property type="entry name" value="ANAPHASE-PROMOTING COMPLEX SUBUNIT 1"/>
    <property type="match status" value="1"/>
</dbReference>
<dbReference type="PANTHER" id="PTHR12827">
    <property type="entry name" value="MEIOTIC CHECKPOINT REGULATOR TSG24 FAMILY MEMBER"/>
    <property type="match status" value="1"/>
</dbReference>
<dbReference type="Pfam" id="PF12859">
    <property type="entry name" value="ANAPC1"/>
    <property type="match status" value="2"/>
</dbReference>
<dbReference type="Pfam" id="PF21282">
    <property type="entry name" value="APC1_3rd"/>
    <property type="match status" value="1"/>
</dbReference>
<dbReference type="Pfam" id="PF18122">
    <property type="entry name" value="APC1_C"/>
    <property type="match status" value="1"/>
</dbReference>
<dbReference type="Pfam" id="PF20518">
    <property type="entry name" value="Apc1_MidN"/>
    <property type="match status" value="1"/>
</dbReference>
<gene>
    <name type="primary">ANAPC1</name>
    <name type="synonym">TSG24</name>
</gene>
<protein>
    <recommendedName>
        <fullName>Anaphase-promoting complex subunit 1</fullName>
        <shortName>APC1</shortName>
    </recommendedName>
    <alternativeName>
        <fullName>Cyclosome subunit 1</fullName>
    </alternativeName>
    <alternativeName>
        <fullName>Mitotic checkpoint regulator</fullName>
    </alternativeName>
    <alternativeName>
        <fullName>Testis-specific gene 24 protein</fullName>
    </alternativeName>
</protein>
<keyword id="KW-0002">3D-structure</keyword>
<keyword id="KW-0131">Cell cycle</keyword>
<keyword id="KW-0132">Cell division</keyword>
<keyword id="KW-0242">Dwarfism</keyword>
<keyword id="KW-0038">Ectodermal dysplasia</keyword>
<keyword id="KW-1063">Hypotrichosis</keyword>
<keyword id="KW-0498">Mitosis</keyword>
<keyword id="KW-0597">Phosphoprotein</keyword>
<keyword id="KW-1267">Proteomics identification</keyword>
<keyword id="KW-1185">Reference proteome</keyword>
<keyword id="KW-0677">Repeat</keyword>
<keyword id="KW-0833">Ubl conjugation pathway</keyword>
<evidence type="ECO:0000256" key="1">
    <source>
        <dbReference type="SAM" id="MobiDB-lite"/>
    </source>
</evidence>
<evidence type="ECO:0000269" key="2">
    <source>
    </source>
</evidence>
<evidence type="ECO:0000269" key="3">
    <source>
    </source>
</evidence>
<evidence type="ECO:0000269" key="4">
    <source>
    </source>
</evidence>
<evidence type="ECO:0000269" key="5">
    <source>
    </source>
</evidence>
<evidence type="ECO:0000269" key="6">
    <source>
    </source>
</evidence>
<evidence type="ECO:0000269" key="7">
    <source>
    </source>
</evidence>
<evidence type="ECO:0000305" key="8"/>
<evidence type="ECO:0007744" key="9">
    <source>
        <dbReference type="PDB" id="4UI9"/>
    </source>
</evidence>
<evidence type="ECO:0007744" key="10">
    <source>
        <dbReference type="PDB" id="5A31"/>
    </source>
</evidence>
<evidence type="ECO:0007744" key="11">
    <source>
    </source>
</evidence>
<evidence type="ECO:0007744" key="12">
    <source>
    </source>
</evidence>
<evidence type="ECO:0007744" key="13">
    <source>
    </source>
</evidence>
<evidence type="ECO:0007744" key="14">
    <source>
    </source>
</evidence>
<evidence type="ECO:0007744" key="15">
    <source>
    </source>
</evidence>
<evidence type="ECO:0007744" key="16">
    <source>
    </source>
</evidence>
<evidence type="ECO:0007744" key="17">
    <source>
    </source>
</evidence>
<evidence type="ECO:0007744" key="18">
    <source>
    </source>
</evidence>
<evidence type="ECO:0007829" key="19">
    <source>
        <dbReference type="PDB" id="5G05"/>
    </source>
</evidence>
<evidence type="ECO:0007829" key="20">
    <source>
        <dbReference type="PDB" id="5LGG"/>
    </source>
</evidence>
<evidence type="ECO:0007829" key="21">
    <source>
        <dbReference type="PDB" id="6Q6G"/>
    </source>
</evidence>
<evidence type="ECO:0007829" key="22">
    <source>
        <dbReference type="PDB" id="6Q6H"/>
    </source>
</evidence>
<evidence type="ECO:0007829" key="23">
    <source>
        <dbReference type="PDB" id="8PKP"/>
    </source>
</evidence>
<evidence type="ECO:0007829" key="24">
    <source>
        <dbReference type="PDB" id="8TAU"/>
    </source>
</evidence>
<evidence type="ECO:0007829" key="25">
    <source>
        <dbReference type="PDB" id="9GAW"/>
    </source>
</evidence>
<proteinExistence type="evidence at protein level"/>